<comment type="function">
    <text evidence="1">Attaches a formyl group to the free amino group of methionyl-tRNA(fMet). The formyl group appears to play a dual role in the initiator identity of N-formylmethionyl-tRNA by promoting its recognition by IF2 and preventing the misappropriation of this tRNA by the elongation apparatus.</text>
</comment>
<comment type="catalytic activity">
    <reaction evidence="1">
        <text>L-methionyl-tRNA(fMet) + (6R)-10-formyltetrahydrofolate = N-formyl-L-methionyl-tRNA(fMet) + (6S)-5,6,7,8-tetrahydrofolate + H(+)</text>
        <dbReference type="Rhea" id="RHEA:24380"/>
        <dbReference type="Rhea" id="RHEA-COMP:9952"/>
        <dbReference type="Rhea" id="RHEA-COMP:9953"/>
        <dbReference type="ChEBI" id="CHEBI:15378"/>
        <dbReference type="ChEBI" id="CHEBI:57453"/>
        <dbReference type="ChEBI" id="CHEBI:78530"/>
        <dbReference type="ChEBI" id="CHEBI:78844"/>
        <dbReference type="ChEBI" id="CHEBI:195366"/>
        <dbReference type="EC" id="2.1.2.9"/>
    </reaction>
</comment>
<comment type="similarity">
    <text evidence="1">Belongs to the Fmt family.</text>
</comment>
<evidence type="ECO:0000255" key="1">
    <source>
        <dbReference type="HAMAP-Rule" id="MF_00182"/>
    </source>
</evidence>
<feature type="chain" id="PRO_0000082926" description="Methionyl-tRNA formyltransferase">
    <location>
        <begin position="1"/>
        <end position="315"/>
    </location>
</feature>
<feature type="binding site" evidence="1">
    <location>
        <begin position="107"/>
        <end position="110"/>
    </location>
    <ligand>
        <name>(6S)-5,6,7,8-tetrahydrofolate</name>
        <dbReference type="ChEBI" id="CHEBI:57453"/>
    </ligand>
</feature>
<organism>
    <name type="scientific">Borrelia garinii subsp. bavariensis (strain ATCC BAA-2496 / DSM 23469 / PBi)</name>
    <name type="common">Borreliella bavariensis</name>
    <dbReference type="NCBI Taxonomy" id="290434"/>
    <lineage>
        <taxon>Bacteria</taxon>
        <taxon>Pseudomonadati</taxon>
        <taxon>Spirochaetota</taxon>
        <taxon>Spirochaetia</taxon>
        <taxon>Spirochaetales</taxon>
        <taxon>Borreliaceae</taxon>
        <taxon>Borreliella</taxon>
    </lineage>
</organism>
<sequence>MKIFFVSSSFIALEVFKEILRHYEVVGVLTLPDKPKGRGQKLSQNVIKVEAIAKDIKVFDPLILDNNTLNSIRDLNPDLMLVFSYGKIFKKEFLDIFRMGCINVHPSLLPKYRGVSPIQSAILNGDCVSGITIQSMALEMDSGNILVQKKFKIRSYDTSYDISKLVSSLSPSLVLEALEKISKGFLGIPQKSSEATFCSFLKKELGFIDFNLSSFEIKNRINACNPWPLVRAKLDYSDIIFHRADFWEIDLYKERKVGEIVDFDPERGLFVNTGKGILFLLEVQRPGRRVLDFKSFYNGSRQLIGRVFSSVGGIY</sequence>
<proteinExistence type="inferred from homology"/>
<dbReference type="EC" id="2.1.2.9" evidence="1"/>
<dbReference type="EMBL" id="CP000013">
    <property type="protein sequence ID" value="AAU06921.1"/>
    <property type="molecule type" value="Genomic_DNA"/>
</dbReference>
<dbReference type="RefSeq" id="WP_011193416.1">
    <property type="nucleotide sequence ID" value="NZ_CP028872.1"/>
</dbReference>
<dbReference type="SMR" id="Q662V0"/>
<dbReference type="GeneID" id="45160861"/>
<dbReference type="KEGG" id="bga:BG0063"/>
<dbReference type="eggNOG" id="COG0223">
    <property type="taxonomic scope" value="Bacteria"/>
</dbReference>
<dbReference type="HOGENOM" id="CLU_033347_1_1_12"/>
<dbReference type="OrthoDB" id="9802815at2"/>
<dbReference type="Proteomes" id="UP000002276">
    <property type="component" value="Chromosome"/>
</dbReference>
<dbReference type="GO" id="GO:0005829">
    <property type="term" value="C:cytosol"/>
    <property type="evidence" value="ECO:0007669"/>
    <property type="project" value="TreeGrafter"/>
</dbReference>
<dbReference type="GO" id="GO:0004479">
    <property type="term" value="F:methionyl-tRNA formyltransferase activity"/>
    <property type="evidence" value="ECO:0007669"/>
    <property type="project" value="UniProtKB-UniRule"/>
</dbReference>
<dbReference type="CDD" id="cd08646">
    <property type="entry name" value="FMT_core_Met-tRNA-FMT_N"/>
    <property type="match status" value="1"/>
</dbReference>
<dbReference type="CDD" id="cd08704">
    <property type="entry name" value="Met_tRNA_FMT_C"/>
    <property type="match status" value="1"/>
</dbReference>
<dbReference type="Gene3D" id="3.10.25.10">
    <property type="entry name" value="Formyl transferase, C-terminal domain"/>
    <property type="match status" value="1"/>
</dbReference>
<dbReference type="Gene3D" id="3.40.50.170">
    <property type="entry name" value="Formyl transferase, N-terminal domain"/>
    <property type="match status" value="1"/>
</dbReference>
<dbReference type="HAMAP" id="MF_00182">
    <property type="entry name" value="Formyl_trans"/>
    <property type="match status" value="1"/>
</dbReference>
<dbReference type="InterPro" id="IPR005794">
    <property type="entry name" value="Fmt"/>
</dbReference>
<dbReference type="InterPro" id="IPR005793">
    <property type="entry name" value="Formyl_trans_C"/>
</dbReference>
<dbReference type="InterPro" id="IPR037022">
    <property type="entry name" value="Formyl_trans_C_sf"/>
</dbReference>
<dbReference type="InterPro" id="IPR002376">
    <property type="entry name" value="Formyl_transf_N"/>
</dbReference>
<dbReference type="InterPro" id="IPR036477">
    <property type="entry name" value="Formyl_transf_N_sf"/>
</dbReference>
<dbReference type="InterPro" id="IPR011034">
    <property type="entry name" value="Formyl_transferase-like_C_sf"/>
</dbReference>
<dbReference type="InterPro" id="IPR044135">
    <property type="entry name" value="Met-tRNA-FMT_C"/>
</dbReference>
<dbReference type="InterPro" id="IPR041711">
    <property type="entry name" value="Met-tRNA-FMT_N"/>
</dbReference>
<dbReference type="NCBIfam" id="TIGR00460">
    <property type="entry name" value="fmt"/>
    <property type="match status" value="1"/>
</dbReference>
<dbReference type="PANTHER" id="PTHR11138">
    <property type="entry name" value="METHIONYL-TRNA FORMYLTRANSFERASE"/>
    <property type="match status" value="1"/>
</dbReference>
<dbReference type="PANTHER" id="PTHR11138:SF5">
    <property type="entry name" value="METHIONYL-TRNA FORMYLTRANSFERASE, MITOCHONDRIAL"/>
    <property type="match status" value="1"/>
</dbReference>
<dbReference type="Pfam" id="PF02911">
    <property type="entry name" value="Formyl_trans_C"/>
    <property type="match status" value="1"/>
</dbReference>
<dbReference type="Pfam" id="PF00551">
    <property type="entry name" value="Formyl_trans_N"/>
    <property type="match status" value="1"/>
</dbReference>
<dbReference type="SUPFAM" id="SSF50486">
    <property type="entry name" value="FMT C-terminal domain-like"/>
    <property type="match status" value="1"/>
</dbReference>
<dbReference type="SUPFAM" id="SSF53328">
    <property type="entry name" value="Formyltransferase"/>
    <property type="match status" value="1"/>
</dbReference>
<gene>
    <name evidence="1" type="primary">fmt</name>
    <name type="ordered locus">BG0063</name>
</gene>
<reference key="1">
    <citation type="journal article" date="2004" name="Nucleic Acids Res.">
        <title>Comparative analysis of the Borrelia garinii genome.</title>
        <authorList>
            <person name="Gloeckner G."/>
            <person name="Lehmann R."/>
            <person name="Romualdi A."/>
            <person name="Pradella S."/>
            <person name="Schulte-Spechtel U."/>
            <person name="Schilhabel M."/>
            <person name="Wilske B."/>
            <person name="Suehnel J."/>
            <person name="Platzer M."/>
        </authorList>
    </citation>
    <scope>NUCLEOTIDE SEQUENCE [LARGE SCALE GENOMIC DNA]</scope>
    <source>
        <strain>ATCC BAA-2496 / DSM 23469 / PBi</strain>
    </source>
</reference>
<protein>
    <recommendedName>
        <fullName evidence="1">Methionyl-tRNA formyltransferase</fullName>
        <ecNumber evidence="1">2.1.2.9</ecNumber>
    </recommendedName>
</protein>
<keyword id="KW-0648">Protein biosynthesis</keyword>
<keyword id="KW-0808">Transferase</keyword>
<accession>Q662V0</accession>
<name>FMT_BORGP</name>